<protein>
    <recommendedName>
        <fullName evidence="1">Ribosomal RNA small subunit methyltransferase H</fullName>
        <ecNumber evidence="1">2.1.1.199</ecNumber>
    </recommendedName>
    <alternativeName>
        <fullName evidence="1">16S rRNA m(4)C1402 methyltransferase</fullName>
    </alternativeName>
    <alternativeName>
        <fullName evidence="1">rRNA (cytosine-N(4)-)-methyltransferase RsmH</fullName>
    </alternativeName>
</protein>
<accession>A6WZP8</accession>
<feature type="chain" id="PRO_0000387013" description="Ribosomal RNA small subunit methyltransferase H">
    <location>
        <begin position="1"/>
        <end position="347"/>
    </location>
</feature>
<feature type="region of interest" description="Disordered" evidence="2">
    <location>
        <begin position="291"/>
        <end position="347"/>
    </location>
</feature>
<feature type="binding site" evidence="1">
    <location>
        <begin position="47"/>
        <end position="49"/>
    </location>
    <ligand>
        <name>S-adenosyl-L-methionine</name>
        <dbReference type="ChEBI" id="CHEBI:59789"/>
    </ligand>
</feature>
<feature type="binding site" evidence="1">
    <location>
        <position position="64"/>
    </location>
    <ligand>
        <name>S-adenosyl-L-methionine</name>
        <dbReference type="ChEBI" id="CHEBI:59789"/>
    </ligand>
</feature>
<feature type="binding site" evidence="1">
    <location>
        <position position="91"/>
    </location>
    <ligand>
        <name>S-adenosyl-L-methionine</name>
        <dbReference type="ChEBI" id="CHEBI:59789"/>
    </ligand>
</feature>
<feature type="binding site" evidence="1">
    <location>
        <position position="114"/>
    </location>
    <ligand>
        <name>S-adenosyl-L-methionine</name>
        <dbReference type="ChEBI" id="CHEBI:59789"/>
    </ligand>
</feature>
<feature type="binding site" evidence="1">
    <location>
        <position position="121"/>
    </location>
    <ligand>
        <name>S-adenosyl-L-methionine</name>
        <dbReference type="ChEBI" id="CHEBI:59789"/>
    </ligand>
</feature>
<comment type="function">
    <text evidence="1">Specifically methylates the N4 position of cytidine in position 1402 (C1402) of 16S rRNA.</text>
</comment>
<comment type="catalytic activity">
    <reaction evidence="1">
        <text>cytidine(1402) in 16S rRNA + S-adenosyl-L-methionine = N(4)-methylcytidine(1402) in 16S rRNA + S-adenosyl-L-homocysteine + H(+)</text>
        <dbReference type="Rhea" id="RHEA:42928"/>
        <dbReference type="Rhea" id="RHEA-COMP:10286"/>
        <dbReference type="Rhea" id="RHEA-COMP:10287"/>
        <dbReference type="ChEBI" id="CHEBI:15378"/>
        <dbReference type="ChEBI" id="CHEBI:57856"/>
        <dbReference type="ChEBI" id="CHEBI:59789"/>
        <dbReference type="ChEBI" id="CHEBI:74506"/>
        <dbReference type="ChEBI" id="CHEBI:82748"/>
        <dbReference type="EC" id="2.1.1.199"/>
    </reaction>
</comment>
<comment type="subcellular location">
    <subcellularLocation>
        <location evidence="1">Cytoplasm</location>
    </subcellularLocation>
</comment>
<comment type="similarity">
    <text evidence="1">Belongs to the methyltransferase superfamily. RsmH family.</text>
</comment>
<dbReference type="EC" id="2.1.1.199" evidence="1"/>
<dbReference type="EMBL" id="CP000758">
    <property type="protein sequence ID" value="ABS14452.1"/>
    <property type="molecule type" value="Genomic_DNA"/>
</dbReference>
<dbReference type="RefSeq" id="WP_012091742.1">
    <property type="nucleotide sequence ID" value="NC_009667.1"/>
</dbReference>
<dbReference type="SMR" id="A6WZP8"/>
<dbReference type="STRING" id="439375.Oant_1736"/>
<dbReference type="KEGG" id="oan:Oant_1736"/>
<dbReference type="PATRIC" id="fig|439375.7.peg.1837"/>
<dbReference type="eggNOG" id="COG0275">
    <property type="taxonomic scope" value="Bacteria"/>
</dbReference>
<dbReference type="HOGENOM" id="CLU_038422_1_1_5"/>
<dbReference type="PhylomeDB" id="A6WZP8"/>
<dbReference type="Proteomes" id="UP000002301">
    <property type="component" value="Chromosome 1"/>
</dbReference>
<dbReference type="GO" id="GO:0005737">
    <property type="term" value="C:cytoplasm"/>
    <property type="evidence" value="ECO:0007669"/>
    <property type="project" value="UniProtKB-SubCell"/>
</dbReference>
<dbReference type="GO" id="GO:0071424">
    <property type="term" value="F:rRNA (cytosine-N4-)-methyltransferase activity"/>
    <property type="evidence" value="ECO:0007669"/>
    <property type="project" value="UniProtKB-UniRule"/>
</dbReference>
<dbReference type="GO" id="GO:0070475">
    <property type="term" value="P:rRNA base methylation"/>
    <property type="evidence" value="ECO:0007669"/>
    <property type="project" value="UniProtKB-UniRule"/>
</dbReference>
<dbReference type="Gene3D" id="1.10.150.170">
    <property type="entry name" value="Putative methyltransferase TM0872, insert domain"/>
    <property type="match status" value="1"/>
</dbReference>
<dbReference type="Gene3D" id="3.40.50.150">
    <property type="entry name" value="Vaccinia Virus protein VP39"/>
    <property type="match status" value="1"/>
</dbReference>
<dbReference type="HAMAP" id="MF_01007">
    <property type="entry name" value="16SrRNA_methyltr_H"/>
    <property type="match status" value="1"/>
</dbReference>
<dbReference type="InterPro" id="IPR002903">
    <property type="entry name" value="RsmH"/>
</dbReference>
<dbReference type="InterPro" id="IPR023397">
    <property type="entry name" value="SAM-dep_MeTrfase_MraW_recog"/>
</dbReference>
<dbReference type="InterPro" id="IPR029063">
    <property type="entry name" value="SAM-dependent_MTases_sf"/>
</dbReference>
<dbReference type="NCBIfam" id="TIGR00006">
    <property type="entry name" value="16S rRNA (cytosine(1402)-N(4))-methyltransferase RsmH"/>
    <property type="match status" value="1"/>
</dbReference>
<dbReference type="PANTHER" id="PTHR11265:SF0">
    <property type="entry name" value="12S RRNA N4-METHYLCYTIDINE METHYLTRANSFERASE"/>
    <property type="match status" value="1"/>
</dbReference>
<dbReference type="PANTHER" id="PTHR11265">
    <property type="entry name" value="S-ADENOSYL-METHYLTRANSFERASE MRAW"/>
    <property type="match status" value="1"/>
</dbReference>
<dbReference type="Pfam" id="PF01795">
    <property type="entry name" value="Methyltransf_5"/>
    <property type="match status" value="1"/>
</dbReference>
<dbReference type="PIRSF" id="PIRSF004486">
    <property type="entry name" value="MraW"/>
    <property type="match status" value="1"/>
</dbReference>
<dbReference type="SUPFAM" id="SSF81799">
    <property type="entry name" value="Putative methyltransferase TM0872, insert domain"/>
    <property type="match status" value="1"/>
</dbReference>
<dbReference type="SUPFAM" id="SSF53335">
    <property type="entry name" value="S-adenosyl-L-methionine-dependent methyltransferases"/>
    <property type="match status" value="1"/>
</dbReference>
<name>RSMH_BRUA4</name>
<organism>
    <name type="scientific">Brucella anthropi (strain ATCC 49188 / DSM 6882 / CCUG 24695 / JCM 21032 / LMG 3331 / NBRC 15819 / NCTC 12168 / Alc 37)</name>
    <name type="common">Ochrobactrum anthropi</name>
    <dbReference type="NCBI Taxonomy" id="439375"/>
    <lineage>
        <taxon>Bacteria</taxon>
        <taxon>Pseudomonadati</taxon>
        <taxon>Pseudomonadota</taxon>
        <taxon>Alphaproteobacteria</taxon>
        <taxon>Hyphomicrobiales</taxon>
        <taxon>Brucellaceae</taxon>
        <taxon>Brucella/Ochrobactrum group</taxon>
        <taxon>Brucella</taxon>
    </lineage>
</organism>
<reference key="1">
    <citation type="journal article" date="2011" name="J. Bacteriol.">
        <title>Genome of Ochrobactrum anthropi ATCC 49188 T, a versatile opportunistic pathogen and symbiont of several eukaryotic hosts.</title>
        <authorList>
            <person name="Chain P.S."/>
            <person name="Lang D.M."/>
            <person name="Comerci D.J."/>
            <person name="Malfatti S.A."/>
            <person name="Vergez L.M."/>
            <person name="Shin M."/>
            <person name="Ugalde R.A."/>
            <person name="Garcia E."/>
            <person name="Tolmasky M.E."/>
        </authorList>
    </citation>
    <scope>NUCLEOTIDE SEQUENCE [LARGE SCALE GENOMIC DNA]</scope>
    <source>
        <strain>ATCC 49188 / DSM 6882 / CCUG 24695 / JCM 21032 / LMG 3331 / NBRC 15819 / NCTC 12168 / Alc 37</strain>
    </source>
</reference>
<gene>
    <name evidence="1" type="primary">rsmH</name>
    <name type="synonym">mraW</name>
    <name type="ordered locus">Oant_1736</name>
</gene>
<evidence type="ECO:0000255" key="1">
    <source>
        <dbReference type="HAMAP-Rule" id="MF_01007"/>
    </source>
</evidence>
<evidence type="ECO:0000256" key="2">
    <source>
        <dbReference type="SAM" id="MobiDB-lite"/>
    </source>
</evidence>
<sequence length="347" mass="37574">MMASLGGDNSQAEGAEVRHVPVLIAEVIDALKPVSGAVIVDGTFGAGGYTRRILEAGADVIAIDRDPTAIEAGRAMEKQFPGRLDLVESRFSALDEAVSKVKGAGSKVDGVVLDIGVSSMQIDEAERGFSFQKDGPLDMRMSKKGPSAADVVNRLKTGDLARIFNFLGEERHAGRIARMIDKRRTAQPFTRTLDLANAIETLVGRNPKDRIHPATRVFQALRVYVNDELGELARALLAAERILKPGGRLVVVTFHSLEDRMVKRYFADRAGGSAGSRHLPETHVRLPSFTPAVKGAVGPTAEEEERNPRARSAKLRAGIRTENPPLEDDLSLFGLPKLPETNELARS</sequence>
<keyword id="KW-0963">Cytoplasm</keyword>
<keyword id="KW-0489">Methyltransferase</keyword>
<keyword id="KW-1185">Reference proteome</keyword>
<keyword id="KW-0698">rRNA processing</keyword>
<keyword id="KW-0949">S-adenosyl-L-methionine</keyword>
<keyword id="KW-0808">Transferase</keyword>
<proteinExistence type="inferred from homology"/>